<reference key="1">
    <citation type="journal article" date="1985" name="Eur. J. Biochem.">
        <title>Nucleotide sequence of the gene encoding the hydrogenase from Desulfovibrio vulgaris (Hildenborough).</title>
        <authorList>
            <person name="Voordouw G."/>
            <person name="Brenner S."/>
        </authorList>
    </citation>
    <scope>NUCLEOTIDE SEQUENCE [GENOMIC DNA]</scope>
</reference>
<reference key="2">
    <citation type="journal article" date="2004" name="Nat. Biotechnol.">
        <title>The genome sequence of the anaerobic, sulfate-reducing bacterium Desulfovibrio vulgaris Hildenborough.</title>
        <authorList>
            <person name="Heidelberg J.F."/>
            <person name="Seshadri R."/>
            <person name="Haveman S.A."/>
            <person name="Hemme C.L."/>
            <person name="Paulsen I.T."/>
            <person name="Kolonay J.F."/>
            <person name="Eisen J.A."/>
            <person name="Ward N.L."/>
            <person name="Methe B.A."/>
            <person name="Brinkac L.M."/>
            <person name="Daugherty S.C."/>
            <person name="DeBoy R.T."/>
            <person name="Dodson R.J."/>
            <person name="Durkin A.S."/>
            <person name="Madupu R."/>
            <person name="Nelson W.C."/>
            <person name="Sullivan S.A."/>
            <person name="Fouts D.E."/>
            <person name="Haft D.H."/>
            <person name="Selengut J."/>
            <person name="Peterson J.D."/>
            <person name="Davidsen T.M."/>
            <person name="Zafar N."/>
            <person name="Zhou L."/>
            <person name="Radune D."/>
            <person name="Dimitrov G."/>
            <person name="Hance M."/>
            <person name="Tran K."/>
            <person name="Khouri H.M."/>
            <person name="Gill J."/>
            <person name="Utterback T.R."/>
            <person name="Feldblyum T.V."/>
            <person name="Wall J.D."/>
            <person name="Voordouw G."/>
            <person name="Fraser C.M."/>
        </authorList>
    </citation>
    <scope>NUCLEOTIDE SEQUENCE [LARGE SCALE GENOMIC DNA]</scope>
    <source>
        <strain>ATCC 29579 / DSM 644 / CCUG 34227 / NCIMB 8303 / VKM B-1760 / Hildenborough</strain>
    </source>
</reference>
<reference key="3">
    <citation type="journal article" date="1987" name="Biochem. Biophys. Res. Commun.">
        <title>Identification of three classes of hydrogenase in the genus, Desulfovibrio.</title>
        <authorList>
            <person name="Prickril B.C."/>
            <person name="He S.H."/>
            <person name="Li C."/>
            <person name="Menon N.K."/>
            <person name="Choi E.S."/>
            <person name="Przybyla A.E."/>
            <person name="Dervartanian D.V."/>
            <person name="Peck H.D. Jr."/>
            <person name="Fauque G."/>
            <person name="le Gall J."/>
            <person name="Teixeira M."/>
            <person name="Moura I."/>
            <person name="Moura J.J.G."/>
            <person name="Patil D."/>
            <person name="Huynh B.H."/>
        </authorList>
    </citation>
    <scope>PROTEIN SEQUENCE OF 1-35</scope>
</reference>
<reference key="4">
    <citation type="submission" date="1992-09" db="EMBL/GenBank/DDBJ databases">
        <authorList>
            <person name="van den Berg W.A.M."/>
            <person name="Stokkermans J.P.W.G."/>
            <person name="van Dongen W.M.A.M."/>
        </authorList>
    </citation>
    <scope>NUCLEOTIDE SEQUENCE [GENOMIC DNA] OF 1-15</scope>
</reference>
<reference key="5">
    <citation type="journal article" date="2001" name="J. Am. Chem. Soc.">
        <title>Mossbauer characterization of the iron-sulfur clusters in Desulfovibrio vulgaris hydrogenase.</title>
        <authorList>
            <person name="Pereira A.S."/>
            <person name="Tavares P."/>
            <person name="Moura I."/>
            <person name="Moura J.J.G."/>
            <person name="Huynh B.H."/>
        </authorList>
    </citation>
    <scope>MOSSBAUER SPECTROSCOPY OF IRON-SULFUR CLUSTERS</scope>
</reference>
<reference evidence="4" key="6">
    <citation type="journal article" date="1999" name="Structure">
        <title>Desulfovibrio desulfuricans iron hydrogenase: the structure shows unusual coordination to an active site Fe binuclear center.</title>
        <authorList>
            <person name="Nicolet Y."/>
            <person name="Piras C."/>
            <person name="Legrand P."/>
            <person name="Hatchikian E.C."/>
            <person name="Fontecilla-Camps J.-C."/>
        </authorList>
    </citation>
    <scope>X-RAY CRYSTALLOGRAPHY (1.6 ANGSTROMS) IN COMPLEX WITH SMALL SUBUNIT; IRON-SULFUR (4FE-4S) CLUSTERS AND A BINUCLEAR IRON CENTER</scope>
    <scope>COFACTOR</scope>
</reference>
<reference key="7">
    <citation type="journal article" date="2001" name="J. Am. Chem. Soc.">
        <title>Crystallographic and FTIR spectroscopic evidence of changes in Fe coordination upon reduction of the active site of the Fe-only hydrogenase from Desulfovibrio desulfuricans.</title>
        <authorList>
            <person name="Nicolet Y."/>
            <person name="de Lacey A.L."/>
            <person name="Vernede X."/>
            <person name="Fernandez V.M."/>
            <person name="Hatchikian E.C."/>
            <person name="Fontecilla-Camps J.-C."/>
        </authorList>
    </citation>
    <scope>X-RAY CRYSTALLOGRAPHY (1.85 ANGSTROMS)</scope>
    <scope>ABSORPTION SPECTROSCOPY</scope>
    <scope>EPR SPECTROSCOPY</scope>
    <scope>FOURIER-TRANSFORM INFRARED SPECTROSCOPY</scope>
</reference>
<sequence length="421" mass="45951">MSRTVMERIEYEMHTPDPKADPDKLHFVQIDEAKCIGCDTCSQYCPTAAIFGEMGEPHSIPHIEACINCGQCLTHCPENAIYEAQSWVPEVEKKLKDGKVKCIAMPAPAVRYALGDAFGMPVGSVTTGKMLAALQKLGFAHCWDTEFTADVTIWEEGSEFVERLTKKSDMPLPQFTSCCPGWQKYAETYYPELLPHFSTCKSPIGMNGALAKTYGAERMKYDPKQVYTVSIMPCIAKKYEGLRPELKSSGMRDIDATLTTRELAYMIKKAGIDFAKLPDGKRDSLMGESTGGATIFGVTGGVMEAALRFAYEAVTGKKPDSWDFKAVRGLDGIKEATVNVGGTDVKVAVVHGAKRFKQVCDDVKAGKSPYHFIEYMACPGGCVCGGGQPVMPGVLEAMDRTTTRLYAGLKKRLAMASANKA</sequence>
<organism>
    <name type="scientific">Nitratidesulfovibrio vulgaris (strain ATCC 29579 / DSM 644 / CCUG 34227 / NCIMB 8303 / VKM B-1760 / Hildenborough)</name>
    <name type="common">Desulfovibrio vulgaris</name>
    <dbReference type="NCBI Taxonomy" id="882"/>
    <lineage>
        <taxon>Bacteria</taxon>
        <taxon>Pseudomonadati</taxon>
        <taxon>Thermodesulfobacteriota</taxon>
        <taxon>Desulfovibrionia</taxon>
        <taxon>Desulfovibrionales</taxon>
        <taxon>Desulfovibrionaceae</taxon>
        <taxon>Nitratidesulfovibrio</taxon>
    </lineage>
</organism>
<dbReference type="EC" id="1.12.7.2"/>
<dbReference type="EMBL" id="X02416">
    <property type="protein sequence ID" value="CAA26266.1"/>
    <property type="molecule type" value="Genomic_DNA"/>
</dbReference>
<dbReference type="EMBL" id="AE017285">
    <property type="protein sequence ID" value="AAS96246.1"/>
    <property type="molecule type" value="Genomic_DNA"/>
</dbReference>
<dbReference type="EMBL" id="Z15142">
    <property type="protein sequence ID" value="CAA78848.1"/>
    <property type="molecule type" value="Genomic_DNA"/>
</dbReference>
<dbReference type="PIR" id="A24551">
    <property type="entry name" value="HQDVFL"/>
</dbReference>
<dbReference type="RefSeq" id="WP_010939057.1">
    <property type="nucleotide sequence ID" value="NC_002937.3"/>
</dbReference>
<dbReference type="RefSeq" id="YP_010987.1">
    <property type="nucleotide sequence ID" value="NC_002937.3"/>
</dbReference>
<dbReference type="PDB" id="1E08">
    <property type="method" value="NMR"/>
    <property type="chains" value="A=27-397"/>
</dbReference>
<dbReference type="PDB" id="1GX7">
    <property type="method" value="NMR"/>
    <property type="chains" value="A=27-397"/>
</dbReference>
<dbReference type="PDB" id="1HFE">
    <property type="method" value="X-ray"/>
    <property type="resolution" value="1.60 A"/>
    <property type="chains" value="L/M=1-421"/>
</dbReference>
<dbReference type="PDB" id="8BJ7">
    <property type="method" value="X-ray"/>
    <property type="resolution" value="1.04 A"/>
    <property type="chains" value="A=2-397"/>
</dbReference>
<dbReference type="PDB" id="8BJ8">
    <property type="method" value="X-ray"/>
    <property type="resolution" value="1.01 A"/>
    <property type="chains" value="A=2-397"/>
</dbReference>
<dbReference type="PDB" id="8RTG">
    <property type="method" value="X-ray"/>
    <property type="resolution" value="1.46 A"/>
    <property type="chains" value="A=1-397"/>
</dbReference>
<dbReference type="PDB" id="8RTI">
    <property type="method" value="X-ray"/>
    <property type="resolution" value="1.50 A"/>
    <property type="chains" value="A=1-397"/>
</dbReference>
<dbReference type="PDB" id="8RU6">
    <property type="method" value="X-ray"/>
    <property type="resolution" value="1.15 A"/>
    <property type="chains" value="B=1-392"/>
</dbReference>
<dbReference type="PDB" id="8RU7">
    <property type="method" value="X-ray"/>
    <property type="resolution" value="1.32 A"/>
    <property type="chains" value="A=1-390"/>
</dbReference>
<dbReference type="PDB" id="8RXI">
    <property type="method" value="X-ray"/>
    <property type="resolution" value="1.48 A"/>
    <property type="chains" value="A=1-397"/>
</dbReference>
<dbReference type="PDB" id="8RXJ">
    <property type="method" value="X-ray"/>
    <property type="resolution" value="1.51 A"/>
    <property type="chains" value="A=1-397"/>
</dbReference>
<dbReference type="PDB" id="8RYH">
    <property type="method" value="X-ray"/>
    <property type="resolution" value="1.77 A"/>
    <property type="chains" value="A=1-389"/>
</dbReference>
<dbReference type="PDBsum" id="1E08"/>
<dbReference type="PDBsum" id="1GX7"/>
<dbReference type="PDBsum" id="1HFE"/>
<dbReference type="PDBsum" id="8BJ7"/>
<dbReference type="PDBsum" id="8BJ8"/>
<dbReference type="PDBsum" id="8RTG"/>
<dbReference type="PDBsum" id="8RTI"/>
<dbReference type="PDBsum" id="8RU6"/>
<dbReference type="PDBsum" id="8RU7"/>
<dbReference type="PDBsum" id="8RXI"/>
<dbReference type="PDBsum" id="8RXJ"/>
<dbReference type="PDBsum" id="8RYH"/>
<dbReference type="SMR" id="P07598"/>
<dbReference type="DIP" id="DIP-6186N"/>
<dbReference type="IntAct" id="P07598">
    <property type="interactions" value="1"/>
</dbReference>
<dbReference type="STRING" id="882.DVU_1769"/>
<dbReference type="PaxDb" id="882-DVU_1769"/>
<dbReference type="EnsemblBacteria" id="AAS96246">
    <property type="protein sequence ID" value="AAS96246"/>
    <property type="gene ID" value="DVU_1769"/>
</dbReference>
<dbReference type="KEGG" id="dvu:DVU_1769"/>
<dbReference type="PATRIC" id="fig|882.5.peg.1625"/>
<dbReference type="eggNOG" id="COG1145">
    <property type="taxonomic scope" value="Bacteria"/>
</dbReference>
<dbReference type="eggNOG" id="COG4624">
    <property type="taxonomic scope" value="Bacteria"/>
</dbReference>
<dbReference type="HOGENOM" id="CLU_018240_2_0_7"/>
<dbReference type="OrthoDB" id="9810782at2"/>
<dbReference type="PhylomeDB" id="P07598"/>
<dbReference type="BioCyc" id="MetaCyc:MONOMER-22144"/>
<dbReference type="EvolutionaryTrace" id="P07598"/>
<dbReference type="Proteomes" id="UP000002194">
    <property type="component" value="Chromosome"/>
</dbReference>
<dbReference type="GO" id="GO:0042597">
    <property type="term" value="C:periplasmic space"/>
    <property type="evidence" value="ECO:0007669"/>
    <property type="project" value="UniProtKB-SubCell"/>
</dbReference>
<dbReference type="GO" id="GO:0051539">
    <property type="term" value="F:4 iron, 4 sulfur cluster binding"/>
    <property type="evidence" value="ECO:0007669"/>
    <property type="project" value="UniProtKB-KW"/>
</dbReference>
<dbReference type="GO" id="GO:0008901">
    <property type="term" value="F:ferredoxin hydrogenase activity"/>
    <property type="evidence" value="ECO:0007669"/>
    <property type="project" value="UniProtKB-EC"/>
</dbReference>
<dbReference type="GO" id="GO:0005506">
    <property type="term" value="F:iron ion binding"/>
    <property type="evidence" value="ECO:0007669"/>
    <property type="project" value="InterPro"/>
</dbReference>
<dbReference type="Gene3D" id="3.30.70.20">
    <property type="match status" value="1"/>
</dbReference>
<dbReference type="Gene3D" id="3.40.50.1780">
    <property type="match status" value="1"/>
</dbReference>
<dbReference type="Gene3D" id="3.40.950.10">
    <property type="entry name" value="Fe-only Hydrogenase (Larger Subunit), Chain L, domain 3"/>
    <property type="match status" value="1"/>
</dbReference>
<dbReference type="InterPro" id="IPR017896">
    <property type="entry name" value="4Fe4S_Fe-S-bd"/>
</dbReference>
<dbReference type="InterPro" id="IPR017900">
    <property type="entry name" value="4Fe4S_Fe_S_CS"/>
</dbReference>
<dbReference type="InterPro" id="IPR050340">
    <property type="entry name" value="Cytosolic_Fe-S_CAF"/>
</dbReference>
<dbReference type="InterPro" id="IPR009016">
    <property type="entry name" value="Fe_hydrogenase"/>
</dbReference>
<dbReference type="InterPro" id="IPR004108">
    <property type="entry name" value="Fe_hydrogenase_lsu_C"/>
</dbReference>
<dbReference type="InterPro" id="IPR013352">
    <property type="entry name" value="Fe_hydrogenase_subset"/>
</dbReference>
<dbReference type="NCBIfam" id="TIGR02512">
    <property type="entry name" value="FeFe_hydrog_A"/>
    <property type="match status" value="1"/>
</dbReference>
<dbReference type="PANTHER" id="PTHR11615">
    <property type="entry name" value="NITRATE, FORMATE, IRON DEHYDROGENASE"/>
    <property type="match status" value="1"/>
</dbReference>
<dbReference type="Pfam" id="PF02906">
    <property type="entry name" value="Fe_hyd_lg_C"/>
    <property type="match status" value="1"/>
</dbReference>
<dbReference type="Pfam" id="PF13237">
    <property type="entry name" value="Fer4_10"/>
    <property type="match status" value="1"/>
</dbReference>
<dbReference type="SUPFAM" id="SSF54862">
    <property type="entry name" value="4Fe-4S ferredoxins"/>
    <property type="match status" value="1"/>
</dbReference>
<dbReference type="SUPFAM" id="SSF53920">
    <property type="entry name" value="Fe-only hydrogenase"/>
    <property type="match status" value="1"/>
</dbReference>
<dbReference type="PROSITE" id="PS00198">
    <property type="entry name" value="4FE4S_FER_1"/>
    <property type="match status" value="2"/>
</dbReference>
<dbReference type="PROSITE" id="PS51379">
    <property type="entry name" value="4FE4S_FER_2"/>
    <property type="match status" value="2"/>
</dbReference>
<feature type="chain" id="PRO_0000159239" description="Periplasmic [Fe] hydrogenase large subunit">
    <location>
        <begin position="1"/>
        <end position="421"/>
    </location>
</feature>
<feature type="domain" description="4Fe-4S ferredoxin-type 1" evidence="1">
    <location>
        <begin position="26"/>
        <end position="57"/>
    </location>
</feature>
<feature type="domain" description="4Fe-4S ferredoxin-type 2" evidence="1">
    <location>
        <begin position="59"/>
        <end position="86"/>
    </location>
</feature>
<feature type="binding site" evidence="2 4">
    <location>
        <position position="35"/>
    </location>
    <ligand>
        <name>[4Fe-4S] cluster</name>
        <dbReference type="ChEBI" id="CHEBI:49883"/>
        <label>1</label>
    </ligand>
</feature>
<feature type="binding site" evidence="2 4">
    <location>
        <position position="38"/>
    </location>
    <ligand>
        <name>[4Fe-4S] cluster</name>
        <dbReference type="ChEBI" id="CHEBI:49883"/>
        <label>1</label>
    </ligand>
</feature>
<feature type="binding site" evidence="2 4">
    <location>
        <position position="41"/>
    </location>
    <ligand>
        <name>[4Fe-4S] cluster</name>
        <dbReference type="ChEBI" id="CHEBI:49883"/>
        <label>1</label>
    </ligand>
</feature>
<feature type="binding site" evidence="2 4">
    <location>
        <position position="45"/>
    </location>
    <ligand>
        <name>[4Fe-4S] cluster</name>
        <dbReference type="ChEBI" id="CHEBI:49883"/>
        <label>2</label>
    </ligand>
</feature>
<feature type="binding site" evidence="2 4">
    <location>
        <position position="66"/>
    </location>
    <ligand>
        <name>[4Fe-4S] cluster</name>
        <dbReference type="ChEBI" id="CHEBI:49883"/>
        <label>2</label>
    </ligand>
</feature>
<feature type="binding site" evidence="2 4">
    <location>
        <position position="69"/>
    </location>
    <ligand>
        <name>[4Fe-4S] cluster</name>
        <dbReference type="ChEBI" id="CHEBI:49883"/>
        <label>2</label>
    </ligand>
</feature>
<feature type="binding site" evidence="2 4">
    <location>
        <position position="72"/>
    </location>
    <ligand>
        <name>[4Fe-4S] cluster</name>
        <dbReference type="ChEBI" id="CHEBI:49883"/>
        <label>2</label>
    </ligand>
</feature>
<feature type="binding site" evidence="2 4">
    <location>
        <position position="76"/>
    </location>
    <ligand>
        <name>[4Fe-4S] cluster</name>
        <dbReference type="ChEBI" id="CHEBI:49883"/>
        <label>1</label>
    </ligand>
</feature>
<feature type="binding site" evidence="2 4">
    <location>
        <position position="179"/>
    </location>
    <ligand>
        <name>[4Fe-4S] cluster</name>
        <dbReference type="ChEBI" id="CHEBI:49883"/>
        <label>3</label>
    </ligand>
</feature>
<feature type="binding site" evidence="2 4">
    <location>
        <position position="234"/>
    </location>
    <ligand>
        <name>[4Fe-4S] cluster</name>
        <dbReference type="ChEBI" id="CHEBI:49883"/>
        <label>3</label>
    </ligand>
</feature>
<feature type="binding site" evidence="2 4">
    <location>
        <position position="378"/>
    </location>
    <ligand>
        <name>[4Fe-4S] cluster</name>
        <dbReference type="ChEBI" id="CHEBI:49883"/>
        <label>3</label>
    </ligand>
</feature>
<feature type="binding site" evidence="2 4">
    <location>
        <position position="382"/>
    </location>
    <ligand>
        <name>[4Fe-4S] cluster</name>
        <dbReference type="ChEBI" id="CHEBI:49883"/>
        <label>3</label>
    </ligand>
</feature>
<feature type="binding site" evidence="2 4">
    <location>
        <position position="382"/>
    </location>
    <ligand>
        <name>Fe(2+)</name>
        <dbReference type="ChEBI" id="CHEBI:29033"/>
    </ligand>
</feature>
<feature type="sequence conflict" description="In Ref. 3; AA sequence." evidence="3" ref="3">
    <original>C</original>
    <variation>K</variation>
    <location>
        <position position="35"/>
    </location>
</feature>
<feature type="strand" evidence="5">
    <location>
        <begin position="3"/>
        <end position="6"/>
    </location>
</feature>
<feature type="strand" evidence="5">
    <location>
        <begin position="9"/>
        <end position="12"/>
    </location>
</feature>
<feature type="helix" evidence="5">
    <location>
        <begin position="22"/>
        <end position="24"/>
    </location>
</feature>
<feature type="strand" evidence="5">
    <location>
        <begin position="27"/>
        <end position="30"/>
    </location>
</feature>
<feature type="turn" evidence="5">
    <location>
        <begin position="32"/>
        <end position="34"/>
    </location>
</feature>
<feature type="helix" evidence="5">
    <location>
        <begin position="40"/>
        <end position="44"/>
    </location>
</feature>
<feature type="helix" evidence="5">
    <location>
        <begin position="63"/>
        <end position="65"/>
    </location>
</feature>
<feature type="helix" evidence="5">
    <location>
        <begin position="71"/>
        <end position="75"/>
    </location>
</feature>
<feature type="strand" evidence="5">
    <location>
        <begin position="81"/>
        <end position="83"/>
    </location>
</feature>
<feature type="helix" evidence="5">
    <location>
        <begin position="88"/>
        <end position="95"/>
    </location>
</feature>
<feature type="strand" evidence="5">
    <location>
        <begin position="101"/>
        <end position="106"/>
    </location>
</feature>
<feature type="helix" evidence="5">
    <location>
        <begin position="108"/>
        <end position="112"/>
    </location>
</feature>
<feature type="helix" evidence="5">
    <location>
        <begin position="114"/>
        <end position="118"/>
    </location>
</feature>
<feature type="helix" evidence="5">
    <location>
        <begin position="127"/>
        <end position="137"/>
    </location>
</feature>
<feature type="strand" evidence="5">
    <location>
        <begin position="140"/>
        <end position="142"/>
    </location>
</feature>
<feature type="helix" evidence="5">
    <location>
        <begin position="145"/>
        <end position="164"/>
    </location>
</feature>
<feature type="strand" evidence="5">
    <location>
        <begin position="167"/>
        <end position="169"/>
    </location>
</feature>
<feature type="strand" evidence="5">
    <location>
        <begin position="172"/>
        <end position="175"/>
    </location>
</feature>
<feature type="helix" evidence="5">
    <location>
        <begin position="180"/>
        <end position="189"/>
    </location>
</feature>
<feature type="helix" evidence="5">
    <location>
        <begin position="191"/>
        <end position="196"/>
    </location>
</feature>
<feature type="helix" evidence="5">
    <location>
        <begin position="203"/>
        <end position="211"/>
    </location>
</feature>
<feature type="helix" evidence="5">
    <location>
        <begin position="214"/>
        <end position="219"/>
    </location>
</feature>
<feature type="helix" evidence="5">
    <location>
        <begin position="223"/>
        <end position="225"/>
    </location>
</feature>
<feature type="strand" evidence="5">
    <location>
        <begin position="226"/>
        <end position="233"/>
    </location>
</feature>
<feature type="helix" evidence="5">
    <location>
        <begin position="236"/>
        <end position="241"/>
    </location>
</feature>
<feature type="strand" evidence="5">
    <location>
        <begin position="256"/>
        <end position="259"/>
    </location>
</feature>
<feature type="helix" evidence="5">
    <location>
        <begin position="260"/>
        <end position="269"/>
    </location>
</feature>
<feature type="helix" evidence="5">
    <location>
        <begin position="274"/>
        <end position="276"/>
    </location>
</feature>
<feature type="turn" evidence="5">
    <location>
        <begin position="284"/>
        <end position="286"/>
    </location>
</feature>
<feature type="helix" evidence="5">
    <location>
        <begin position="291"/>
        <end position="294"/>
    </location>
</feature>
<feature type="helix" evidence="5">
    <location>
        <begin position="295"/>
        <end position="297"/>
    </location>
</feature>
<feature type="helix" evidence="5">
    <location>
        <begin position="301"/>
        <end position="315"/>
    </location>
</feature>
<feature type="helix" evidence="5">
    <location>
        <begin position="325"/>
        <end position="327"/>
    </location>
</feature>
<feature type="strand" evidence="5">
    <location>
        <begin position="332"/>
        <end position="340"/>
    </location>
</feature>
<feature type="strand" evidence="5">
    <location>
        <begin position="343"/>
        <end position="352"/>
    </location>
</feature>
<feature type="helix" evidence="5">
    <location>
        <begin position="353"/>
        <end position="355"/>
    </location>
</feature>
<feature type="helix" evidence="5">
    <location>
        <begin position="356"/>
        <end position="365"/>
    </location>
</feature>
<feature type="strand" evidence="5">
    <location>
        <begin position="371"/>
        <end position="378"/>
    </location>
</feature>
<feature type="helix" evidence="5">
    <location>
        <begin position="382"/>
        <end position="384"/>
    </location>
</feature>
<accession>P07598</accession>
<name>PHFL_NITV2</name>
<keyword id="KW-0002">3D-structure</keyword>
<keyword id="KW-0004">4Fe-4S</keyword>
<keyword id="KW-0903">Direct protein sequencing</keyword>
<keyword id="KW-0249">Electron transport</keyword>
<keyword id="KW-0408">Iron</keyword>
<keyword id="KW-0411">Iron-sulfur</keyword>
<keyword id="KW-0479">Metal-binding</keyword>
<keyword id="KW-0560">Oxidoreductase</keyword>
<keyword id="KW-0574">Periplasm</keyword>
<keyword id="KW-1185">Reference proteome</keyword>
<keyword id="KW-0677">Repeat</keyword>
<keyword id="KW-0813">Transport</keyword>
<gene>
    <name type="primary">hydA</name>
    <name type="ordered locus">DVU_1769</name>
</gene>
<comment type="function">
    <text>May be involved in hydrogen uptake for the reduction of sulfate to hydrogen sulfide in an electron transport chain. Cytochrome c3 is likely to be the physiological electron carrier for the enzyme.</text>
</comment>
<comment type="catalytic activity">
    <reaction>
        <text>H2 + 2 oxidized [2Fe-2S]-[ferredoxin] = 2 reduced [2Fe-2S]-[ferredoxin] + 2 H(+)</text>
        <dbReference type="Rhea" id="RHEA:17445"/>
        <dbReference type="Rhea" id="RHEA-COMP:10000"/>
        <dbReference type="Rhea" id="RHEA-COMP:10001"/>
        <dbReference type="ChEBI" id="CHEBI:15378"/>
        <dbReference type="ChEBI" id="CHEBI:18276"/>
        <dbReference type="ChEBI" id="CHEBI:33737"/>
        <dbReference type="ChEBI" id="CHEBI:33738"/>
        <dbReference type="EC" id="1.12.7.2"/>
    </reaction>
</comment>
<comment type="cofactor">
    <cofactor evidence="2">
        <name>[4Fe-4S] cluster</name>
        <dbReference type="ChEBI" id="CHEBI:49883"/>
    </cofactor>
    <text evidence="2">Binds 3 [4Fe-4S] clusters per subunit.</text>
</comment>
<comment type="cofactor">
    <cofactor evidence="2">
        <name>Fe(2+)</name>
        <dbReference type="ChEBI" id="CHEBI:29033"/>
    </cofactor>
    <text evidence="2">Contains an active site Fe binuclear center, which is coordinated by Cys-382 and by non-protein ligands.</text>
</comment>
<comment type="subunit">
    <text evidence="2">Heterodimer of a large and a small subunit.</text>
</comment>
<comment type="subcellular location">
    <subcellularLocation>
        <location>Periplasm</location>
    </subcellularLocation>
</comment>
<comment type="miscellaneous">
    <text>[Fe], [NiFe], and [NiFeSe] hydrogenases appear to represent three distinct enzymes having hydrogenase activity.</text>
</comment>
<evidence type="ECO:0000255" key="1">
    <source>
        <dbReference type="PROSITE-ProRule" id="PRU00711"/>
    </source>
</evidence>
<evidence type="ECO:0000269" key="2">
    <source>
    </source>
</evidence>
<evidence type="ECO:0000305" key="3"/>
<evidence type="ECO:0007744" key="4">
    <source>
        <dbReference type="PDB" id="1HFE"/>
    </source>
</evidence>
<evidence type="ECO:0007829" key="5">
    <source>
        <dbReference type="PDB" id="8BJ8"/>
    </source>
</evidence>
<proteinExistence type="evidence at protein level"/>
<protein>
    <recommendedName>
        <fullName>Periplasmic [Fe] hydrogenase large subunit</fullName>
        <ecNumber>1.12.7.2</ecNumber>
    </recommendedName>
    <alternativeName>
        <fullName>Fe hydrogenlyase</fullName>
    </alternativeName>
</protein>